<reference key="1">
    <citation type="journal article" date="2009" name="PLoS Pathog.">
        <title>Genomic evidence for the evolution of Streptococcus equi: host restriction, increased virulence, and genetic exchange with human pathogens.</title>
        <authorList>
            <person name="Holden M.T.G."/>
            <person name="Heather Z."/>
            <person name="Paillot R."/>
            <person name="Steward K.F."/>
            <person name="Webb K."/>
            <person name="Ainslie F."/>
            <person name="Jourdan T."/>
            <person name="Bason N.C."/>
            <person name="Holroyd N.E."/>
            <person name="Mungall K."/>
            <person name="Quail M.A."/>
            <person name="Sanders M."/>
            <person name="Simmonds M."/>
            <person name="Willey D."/>
            <person name="Brooks K."/>
            <person name="Aanensen D.M."/>
            <person name="Spratt B.G."/>
            <person name="Jolley K.A."/>
            <person name="Maiden M.C.J."/>
            <person name="Kehoe M."/>
            <person name="Chanter N."/>
            <person name="Bentley S.D."/>
            <person name="Robinson C."/>
            <person name="Maskell D.J."/>
            <person name="Parkhill J."/>
            <person name="Waller A.S."/>
        </authorList>
    </citation>
    <scope>NUCLEOTIDE SEQUENCE [LARGE SCALE GENOMIC DNA]</scope>
    <source>
        <strain>4047</strain>
    </source>
</reference>
<dbReference type="EMBL" id="FM204883">
    <property type="protein sequence ID" value="CAW93851.1"/>
    <property type="molecule type" value="Genomic_DNA"/>
</dbReference>
<dbReference type="RefSeq" id="WP_012679553.1">
    <property type="nucleotide sequence ID" value="NC_012471.1"/>
</dbReference>
<dbReference type="SMR" id="C0MC15"/>
<dbReference type="KEGG" id="seu:SEQ_1161"/>
<dbReference type="HOGENOM" id="CLU_036856_0_1_9"/>
<dbReference type="OrthoDB" id="9806673at2"/>
<dbReference type="Proteomes" id="UP000001365">
    <property type="component" value="Chromosome"/>
</dbReference>
<dbReference type="GO" id="GO:0005737">
    <property type="term" value="C:cytoplasm"/>
    <property type="evidence" value="ECO:0007669"/>
    <property type="project" value="UniProtKB-SubCell"/>
</dbReference>
<dbReference type="GO" id="GO:0016149">
    <property type="term" value="F:translation release factor activity, codon specific"/>
    <property type="evidence" value="ECO:0007669"/>
    <property type="project" value="UniProtKB-UniRule"/>
</dbReference>
<dbReference type="FunFam" id="3.30.160.20:FF:000027">
    <property type="entry name" value="Peptide chain release factor 1"/>
    <property type="match status" value="1"/>
</dbReference>
<dbReference type="FunFam" id="3.30.70.1660:FF:000002">
    <property type="entry name" value="Peptide chain release factor 1"/>
    <property type="match status" value="1"/>
</dbReference>
<dbReference type="FunFam" id="3.30.70.1660:FF:000004">
    <property type="entry name" value="Peptide chain release factor 1"/>
    <property type="match status" value="1"/>
</dbReference>
<dbReference type="Gene3D" id="3.30.160.20">
    <property type="match status" value="1"/>
</dbReference>
<dbReference type="Gene3D" id="3.30.70.1660">
    <property type="match status" value="2"/>
</dbReference>
<dbReference type="Gene3D" id="6.10.140.1950">
    <property type="match status" value="1"/>
</dbReference>
<dbReference type="HAMAP" id="MF_00093">
    <property type="entry name" value="Rel_fac_1"/>
    <property type="match status" value="1"/>
</dbReference>
<dbReference type="InterPro" id="IPR005139">
    <property type="entry name" value="PCRF"/>
</dbReference>
<dbReference type="InterPro" id="IPR000352">
    <property type="entry name" value="Pep_chain_release_fac_I"/>
</dbReference>
<dbReference type="InterPro" id="IPR045853">
    <property type="entry name" value="Pep_chain_release_fac_I_sf"/>
</dbReference>
<dbReference type="InterPro" id="IPR050057">
    <property type="entry name" value="Prokaryotic/Mito_RF"/>
</dbReference>
<dbReference type="InterPro" id="IPR004373">
    <property type="entry name" value="RF-1"/>
</dbReference>
<dbReference type="NCBIfam" id="TIGR00019">
    <property type="entry name" value="prfA"/>
    <property type="match status" value="1"/>
</dbReference>
<dbReference type="NCBIfam" id="NF001859">
    <property type="entry name" value="PRK00591.1"/>
    <property type="match status" value="1"/>
</dbReference>
<dbReference type="PANTHER" id="PTHR43804">
    <property type="entry name" value="LD18447P"/>
    <property type="match status" value="1"/>
</dbReference>
<dbReference type="PANTHER" id="PTHR43804:SF7">
    <property type="entry name" value="LD18447P"/>
    <property type="match status" value="1"/>
</dbReference>
<dbReference type="Pfam" id="PF03462">
    <property type="entry name" value="PCRF"/>
    <property type="match status" value="1"/>
</dbReference>
<dbReference type="Pfam" id="PF00472">
    <property type="entry name" value="RF-1"/>
    <property type="match status" value="1"/>
</dbReference>
<dbReference type="SMART" id="SM00937">
    <property type="entry name" value="PCRF"/>
    <property type="match status" value="1"/>
</dbReference>
<dbReference type="SUPFAM" id="SSF75620">
    <property type="entry name" value="Release factor"/>
    <property type="match status" value="1"/>
</dbReference>
<dbReference type="PROSITE" id="PS00745">
    <property type="entry name" value="RF_PROK_I"/>
    <property type="match status" value="1"/>
</dbReference>
<gene>
    <name evidence="1" type="primary">prfA</name>
    <name type="ordered locus">SEQ_1161</name>
</gene>
<keyword id="KW-0963">Cytoplasm</keyword>
<keyword id="KW-0488">Methylation</keyword>
<keyword id="KW-0648">Protein biosynthesis</keyword>
<organism>
    <name type="scientific">Streptococcus equi subsp. equi (strain 4047)</name>
    <dbReference type="NCBI Taxonomy" id="553482"/>
    <lineage>
        <taxon>Bacteria</taxon>
        <taxon>Bacillati</taxon>
        <taxon>Bacillota</taxon>
        <taxon>Bacilli</taxon>
        <taxon>Lactobacillales</taxon>
        <taxon>Streptococcaceae</taxon>
        <taxon>Streptococcus</taxon>
    </lineage>
</organism>
<accession>C0MC15</accession>
<protein>
    <recommendedName>
        <fullName evidence="1">Peptide chain release factor 1</fullName>
        <shortName evidence="1">RF-1</shortName>
    </recommendedName>
</protein>
<comment type="function">
    <text evidence="1">Peptide chain release factor 1 directs the termination of translation in response to the peptide chain termination codons UAG and UAA.</text>
</comment>
<comment type="subcellular location">
    <subcellularLocation>
        <location evidence="1">Cytoplasm</location>
    </subcellularLocation>
</comment>
<comment type="PTM">
    <text evidence="1">Methylated by PrmC. Methylation increases the termination efficiency of RF1.</text>
</comment>
<comment type="similarity">
    <text evidence="1">Belongs to the prokaryotic/mitochondrial release factor family.</text>
</comment>
<feature type="chain" id="PRO_1000193505" description="Peptide chain release factor 1">
    <location>
        <begin position="1"/>
        <end position="360"/>
    </location>
</feature>
<feature type="region of interest" description="Disordered" evidence="2">
    <location>
        <begin position="288"/>
        <end position="308"/>
    </location>
</feature>
<feature type="compositionally biased region" description="Basic and acidic residues" evidence="2">
    <location>
        <begin position="293"/>
        <end position="308"/>
    </location>
</feature>
<feature type="modified residue" description="N5-methylglutamine" evidence="1">
    <location>
        <position position="236"/>
    </location>
</feature>
<sequence length="360" mass="40454">MNIYDQLQAVEDRYEELGELLSDPEVVSDTKRFMALSKEEASTRETVAAYRQYKAIIQSIDDAEEMIKEAGGDPDIEEMAKEELKEAKSAKEAYEDKLKLLLLPKDPNDDKNIILEIRGAAGGDEAALFAGDLLAMYQKFAESQGWRFEVMEASYNGVGGIKEVVAMVSGQSVYSKLKYESGAHRVQRVPVTESQGRVHTSTATVLVMPEVEEVEYDIDPKDLRIDIYHASGAGGQNVNKVATAVRIVHLPTNIKVEMQEERTQQKNRDKAMKIIRARVADHFAQIAQDEQDAERKSTIGTGDRSERIRTYNFPQNRVTDHRIGLTLQKLDTILSGKLDEIVDALVLYDQTQKLESLNNQ</sequence>
<proteinExistence type="inferred from homology"/>
<name>RF1_STRE4</name>
<evidence type="ECO:0000255" key="1">
    <source>
        <dbReference type="HAMAP-Rule" id="MF_00093"/>
    </source>
</evidence>
<evidence type="ECO:0000256" key="2">
    <source>
        <dbReference type="SAM" id="MobiDB-lite"/>
    </source>
</evidence>